<dbReference type="EC" id="3.6.1.27" evidence="1"/>
<dbReference type="EMBL" id="AE005174">
    <property type="protein sequence ID" value="AAG58191.1"/>
    <property type="molecule type" value="Genomic_DNA"/>
</dbReference>
<dbReference type="EMBL" id="BA000007">
    <property type="protein sequence ID" value="BAB37363.1"/>
    <property type="molecule type" value="Genomic_DNA"/>
</dbReference>
<dbReference type="PIR" id="D91121">
    <property type="entry name" value="D91121"/>
</dbReference>
<dbReference type="RefSeq" id="NP_311967.1">
    <property type="nucleotide sequence ID" value="NC_002695.1"/>
</dbReference>
<dbReference type="RefSeq" id="WP_001281927.1">
    <property type="nucleotide sequence ID" value="NZ_VOAI01000009.1"/>
</dbReference>
<dbReference type="SMR" id="P60933"/>
<dbReference type="STRING" id="155864.Z4410"/>
<dbReference type="GeneID" id="916234"/>
<dbReference type="KEGG" id="ece:Z4410"/>
<dbReference type="KEGG" id="ecs:ECs_3940"/>
<dbReference type="PATRIC" id="fig|386585.9.peg.4109"/>
<dbReference type="eggNOG" id="COG1968">
    <property type="taxonomic scope" value="Bacteria"/>
</dbReference>
<dbReference type="HOGENOM" id="CLU_060296_2_0_6"/>
<dbReference type="OMA" id="AWYRIVF"/>
<dbReference type="Proteomes" id="UP000000558">
    <property type="component" value="Chromosome"/>
</dbReference>
<dbReference type="Proteomes" id="UP000002519">
    <property type="component" value="Chromosome"/>
</dbReference>
<dbReference type="GO" id="GO:0005886">
    <property type="term" value="C:plasma membrane"/>
    <property type="evidence" value="ECO:0007669"/>
    <property type="project" value="UniProtKB-SubCell"/>
</dbReference>
<dbReference type="GO" id="GO:0050380">
    <property type="term" value="F:undecaprenyl-diphosphatase activity"/>
    <property type="evidence" value="ECO:0007669"/>
    <property type="project" value="UniProtKB-UniRule"/>
</dbReference>
<dbReference type="GO" id="GO:0071555">
    <property type="term" value="P:cell wall organization"/>
    <property type="evidence" value="ECO:0007669"/>
    <property type="project" value="UniProtKB-KW"/>
</dbReference>
<dbReference type="GO" id="GO:0009252">
    <property type="term" value="P:peptidoglycan biosynthetic process"/>
    <property type="evidence" value="ECO:0007669"/>
    <property type="project" value="UniProtKB-KW"/>
</dbReference>
<dbReference type="GO" id="GO:0008360">
    <property type="term" value="P:regulation of cell shape"/>
    <property type="evidence" value="ECO:0007669"/>
    <property type="project" value="UniProtKB-KW"/>
</dbReference>
<dbReference type="GO" id="GO:0046677">
    <property type="term" value="P:response to antibiotic"/>
    <property type="evidence" value="ECO:0007669"/>
    <property type="project" value="UniProtKB-UniRule"/>
</dbReference>
<dbReference type="HAMAP" id="MF_01006">
    <property type="entry name" value="Undec_diphosphatase"/>
    <property type="match status" value="1"/>
</dbReference>
<dbReference type="InterPro" id="IPR003824">
    <property type="entry name" value="UppP"/>
</dbReference>
<dbReference type="NCBIfam" id="NF001388">
    <property type="entry name" value="PRK00281.1-1"/>
    <property type="match status" value="1"/>
</dbReference>
<dbReference type="NCBIfam" id="NF001389">
    <property type="entry name" value="PRK00281.1-2"/>
    <property type="match status" value="1"/>
</dbReference>
<dbReference type="NCBIfam" id="NF001390">
    <property type="entry name" value="PRK00281.1-4"/>
    <property type="match status" value="1"/>
</dbReference>
<dbReference type="NCBIfam" id="TIGR00753">
    <property type="entry name" value="undec_PP_bacA"/>
    <property type="match status" value="1"/>
</dbReference>
<dbReference type="PANTHER" id="PTHR30622">
    <property type="entry name" value="UNDECAPRENYL-DIPHOSPHATASE"/>
    <property type="match status" value="1"/>
</dbReference>
<dbReference type="PANTHER" id="PTHR30622:SF3">
    <property type="entry name" value="UNDECAPRENYL-DIPHOSPHATASE"/>
    <property type="match status" value="1"/>
</dbReference>
<dbReference type="Pfam" id="PF02673">
    <property type="entry name" value="BacA"/>
    <property type="match status" value="1"/>
</dbReference>
<feature type="chain" id="PRO_0000151147" description="Undecaprenyl-diphosphatase">
    <location>
        <begin position="1"/>
        <end position="273"/>
    </location>
</feature>
<feature type="transmembrane region" description="Helical" evidence="1">
    <location>
        <begin position="6"/>
        <end position="26"/>
    </location>
</feature>
<feature type="transmembrane region" description="Helical" evidence="1">
    <location>
        <begin position="45"/>
        <end position="65"/>
    </location>
</feature>
<feature type="transmembrane region" description="Helical" evidence="1">
    <location>
        <begin position="90"/>
        <end position="110"/>
    </location>
</feature>
<feature type="transmembrane region" description="Helical" evidence="1">
    <location>
        <begin position="116"/>
        <end position="136"/>
    </location>
</feature>
<feature type="transmembrane region" description="Helical" evidence="1">
    <location>
        <begin position="190"/>
        <end position="210"/>
    </location>
</feature>
<feature type="transmembrane region" description="Helical" evidence="1">
    <location>
        <begin position="222"/>
        <end position="242"/>
    </location>
</feature>
<feature type="transmembrane region" description="Helical" evidence="1">
    <location>
        <begin position="252"/>
        <end position="272"/>
    </location>
</feature>
<evidence type="ECO:0000255" key="1">
    <source>
        <dbReference type="HAMAP-Rule" id="MF_01006"/>
    </source>
</evidence>
<name>UPPP_ECO57</name>
<comment type="function">
    <text evidence="1">Catalyzes the dephosphorylation of undecaprenyl diphosphate (UPP). Confers resistance to bacitracin.</text>
</comment>
<comment type="catalytic activity">
    <reaction evidence="1">
        <text>di-trans,octa-cis-undecaprenyl diphosphate + H2O = di-trans,octa-cis-undecaprenyl phosphate + phosphate + H(+)</text>
        <dbReference type="Rhea" id="RHEA:28094"/>
        <dbReference type="ChEBI" id="CHEBI:15377"/>
        <dbReference type="ChEBI" id="CHEBI:15378"/>
        <dbReference type="ChEBI" id="CHEBI:43474"/>
        <dbReference type="ChEBI" id="CHEBI:58405"/>
        <dbReference type="ChEBI" id="CHEBI:60392"/>
        <dbReference type="EC" id="3.6.1.27"/>
    </reaction>
</comment>
<comment type="subcellular location">
    <subcellularLocation>
        <location evidence="1">Cell inner membrane</location>
        <topology evidence="1">Multi-pass membrane protein</topology>
    </subcellularLocation>
</comment>
<comment type="miscellaneous">
    <text>Bacitracin is thought to be involved in the inhibition of peptidoglycan synthesis by sequestering undecaprenyl diphosphate, thereby reducing the pool of lipid carrier available.</text>
</comment>
<comment type="similarity">
    <text evidence="1">Belongs to the UppP family.</text>
</comment>
<protein>
    <recommendedName>
        <fullName evidence="1">Undecaprenyl-diphosphatase</fullName>
        <ecNumber evidence="1">3.6.1.27</ecNumber>
    </recommendedName>
    <alternativeName>
        <fullName evidence="1">Bacitracin resistance protein</fullName>
    </alternativeName>
    <alternativeName>
        <fullName evidence="1">Undecaprenyl pyrophosphate phosphatase</fullName>
    </alternativeName>
</protein>
<proteinExistence type="inferred from homology"/>
<keyword id="KW-0046">Antibiotic resistance</keyword>
<keyword id="KW-0997">Cell inner membrane</keyword>
<keyword id="KW-1003">Cell membrane</keyword>
<keyword id="KW-0133">Cell shape</keyword>
<keyword id="KW-0961">Cell wall biogenesis/degradation</keyword>
<keyword id="KW-0378">Hydrolase</keyword>
<keyword id="KW-0472">Membrane</keyword>
<keyword id="KW-0573">Peptidoglycan synthesis</keyword>
<keyword id="KW-1185">Reference proteome</keyword>
<keyword id="KW-0812">Transmembrane</keyword>
<keyword id="KW-1133">Transmembrane helix</keyword>
<reference key="1">
    <citation type="journal article" date="2001" name="Nature">
        <title>Genome sequence of enterohaemorrhagic Escherichia coli O157:H7.</title>
        <authorList>
            <person name="Perna N.T."/>
            <person name="Plunkett G. III"/>
            <person name="Burland V."/>
            <person name="Mau B."/>
            <person name="Glasner J.D."/>
            <person name="Rose D.J."/>
            <person name="Mayhew G.F."/>
            <person name="Evans P.S."/>
            <person name="Gregor J."/>
            <person name="Kirkpatrick H.A."/>
            <person name="Posfai G."/>
            <person name="Hackett J."/>
            <person name="Klink S."/>
            <person name="Boutin A."/>
            <person name="Shao Y."/>
            <person name="Miller L."/>
            <person name="Grotbeck E.J."/>
            <person name="Davis N.W."/>
            <person name="Lim A."/>
            <person name="Dimalanta E.T."/>
            <person name="Potamousis K."/>
            <person name="Apodaca J."/>
            <person name="Anantharaman T.S."/>
            <person name="Lin J."/>
            <person name="Yen G."/>
            <person name="Schwartz D.C."/>
            <person name="Welch R.A."/>
            <person name="Blattner F.R."/>
        </authorList>
    </citation>
    <scope>NUCLEOTIDE SEQUENCE [LARGE SCALE GENOMIC DNA]</scope>
    <source>
        <strain>O157:H7 / EDL933 / ATCC 700927 / EHEC</strain>
    </source>
</reference>
<reference key="2">
    <citation type="journal article" date="2001" name="DNA Res.">
        <title>Complete genome sequence of enterohemorrhagic Escherichia coli O157:H7 and genomic comparison with a laboratory strain K-12.</title>
        <authorList>
            <person name="Hayashi T."/>
            <person name="Makino K."/>
            <person name="Ohnishi M."/>
            <person name="Kurokawa K."/>
            <person name="Ishii K."/>
            <person name="Yokoyama K."/>
            <person name="Han C.-G."/>
            <person name="Ohtsubo E."/>
            <person name="Nakayama K."/>
            <person name="Murata T."/>
            <person name="Tanaka M."/>
            <person name="Tobe T."/>
            <person name="Iida T."/>
            <person name="Takami H."/>
            <person name="Honda T."/>
            <person name="Sasakawa C."/>
            <person name="Ogasawara N."/>
            <person name="Yasunaga T."/>
            <person name="Kuhara S."/>
            <person name="Shiba T."/>
            <person name="Hattori M."/>
            <person name="Shinagawa H."/>
        </authorList>
    </citation>
    <scope>NUCLEOTIDE SEQUENCE [LARGE SCALE GENOMIC DNA]</scope>
    <source>
        <strain>O157:H7 / Sakai / RIMD 0509952 / EHEC</strain>
    </source>
</reference>
<organism>
    <name type="scientific">Escherichia coli O157:H7</name>
    <dbReference type="NCBI Taxonomy" id="83334"/>
    <lineage>
        <taxon>Bacteria</taxon>
        <taxon>Pseudomonadati</taxon>
        <taxon>Pseudomonadota</taxon>
        <taxon>Gammaproteobacteria</taxon>
        <taxon>Enterobacterales</taxon>
        <taxon>Enterobacteriaceae</taxon>
        <taxon>Escherichia</taxon>
    </lineage>
</organism>
<accession>P60933</accession>
<accession>P31054</accession>
<accession>P39203</accession>
<sequence>MSDMHSLLIAAILGVVEGLTEFLPVSSTGHMIIVGHLLGFEGDTAKTFEVVIQLGSILAVVVMFWRRLFGLIGIHFGRPLQHEGESKGRLTLIHILLGMIPAVVLGLLFHDTIKSLFNPINVMYALVVGGLLLIAAECLKPKEPRAPGLDDMTYRQAFMIGCFQCLALWPGFSRSGATISGGMLMGVSRYAASEFSFLLAVPMMMGATALDLYKSWGFLTSGDIPMFAVGFITAFVVALIAIKTFLQLIKRISFIPFAIYRFIVAAAVYVVFF</sequence>
<gene>
    <name evidence="1" type="primary">uppP</name>
    <name type="synonym">bacA</name>
    <name type="synonym">upk</name>
    <name type="ordered locus">Z4410</name>
    <name type="ordered locus">ECs3940</name>
</gene>